<name>RL10E_METJA</name>
<protein>
    <recommendedName>
        <fullName evidence="1">Large ribosomal subunit protein uL16</fullName>
    </recommendedName>
    <alternativeName>
        <fullName evidence="2">50S ribosomal protein L10e</fullName>
    </alternativeName>
</protein>
<proteinExistence type="inferred from homology"/>
<gene>
    <name evidence="1" type="primary">rpl10e</name>
    <name type="ordered locus">MJ0543</name>
</gene>
<reference key="1">
    <citation type="journal article" date="1996" name="Science">
        <title>Complete genome sequence of the methanogenic archaeon, Methanococcus jannaschii.</title>
        <authorList>
            <person name="Bult C.J."/>
            <person name="White O."/>
            <person name="Olsen G.J."/>
            <person name="Zhou L."/>
            <person name="Fleischmann R.D."/>
            <person name="Sutton G.G."/>
            <person name="Blake J.A."/>
            <person name="FitzGerald L.M."/>
            <person name="Clayton R.A."/>
            <person name="Gocayne J.D."/>
            <person name="Kerlavage A.R."/>
            <person name="Dougherty B.A."/>
            <person name="Tomb J.-F."/>
            <person name="Adams M.D."/>
            <person name="Reich C.I."/>
            <person name="Overbeek R."/>
            <person name="Kirkness E.F."/>
            <person name="Weinstock K.G."/>
            <person name="Merrick J.M."/>
            <person name="Glodek A."/>
            <person name="Scott J.L."/>
            <person name="Geoghagen N.S.M."/>
            <person name="Weidman J.F."/>
            <person name="Fuhrmann J.L."/>
            <person name="Nguyen D."/>
            <person name="Utterback T.R."/>
            <person name="Kelley J.M."/>
            <person name="Peterson J.D."/>
            <person name="Sadow P.W."/>
            <person name="Hanna M.C."/>
            <person name="Cotton M.D."/>
            <person name="Roberts K.M."/>
            <person name="Hurst M.A."/>
            <person name="Kaine B.P."/>
            <person name="Borodovsky M."/>
            <person name="Klenk H.-P."/>
            <person name="Fraser C.M."/>
            <person name="Smith H.O."/>
            <person name="Woese C.R."/>
            <person name="Venter J.C."/>
        </authorList>
    </citation>
    <scope>NUCLEOTIDE SEQUENCE [LARGE SCALE GENOMIC DNA]</scope>
    <source>
        <strain>ATCC 43067 / DSM 2661 / JAL-1 / JCM 10045 / NBRC 100440</strain>
    </source>
</reference>
<dbReference type="EMBL" id="L77117">
    <property type="protein sequence ID" value="AAB98535.1"/>
    <property type="molecule type" value="Genomic_DNA"/>
</dbReference>
<dbReference type="PIR" id="G64367">
    <property type="entry name" value="G64367"/>
</dbReference>
<dbReference type="RefSeq" id="WP_010870047.1">
    <property type="nucleotide sequence ID" value="NC_000909.1"/>
</dbReference>
<dbReference type="SMR" id="Q57963"/>
<dbReference type="FunCoup" id="Q57963">
    <property type="interactions" value="139"/>
</dbReference>
<dbReference type="STRING" id="243232.MJ_0543"/>
<dbReference type="PaxDb" id="243232-MJ_0543"/>
<dbReference type="EnsemblBacteria" id="AAB98535">
    <property type="protein sequence ID" value="AAB98535"/>
    <property type="gene ID" value="MJ_0543"/>
</dbReference>
<dbReference type="GeneID" id="1451408"/>
<dbReference type="KEGG" id="mja:MJ_0543"/>
<dbReference type="eggNOG" id="arCOG04113">
    <property type="taxonomic scope" value="Archaea"/>
</dbReference>
<dbReference type="HOGENOM" id="CLU_084051_0_2_2"/>
<dbReference type="InParanoid" id="Q57963"/>
<dbReference type="OrthoDB" id="30538at2157"/>
<dbReference type="PhylomeDB" id="Q57963"/>
<dbReference type="Proteomes" id="UP000000805">
    <property type="component" value="Chromosome"/>
</dbReference>
<dbReference type="GO" id="GO:0022625">
    <property type="term" value="C:cytosolic large ribosomal subunit"/>
    <property type="evidence" value="ECO:0000318"/>
    <property type="project" value="GO_Central"/>
</dbReference>
<dbReference type="GO" id="GO:0003735">
    <property type="term" value="F:structural constituent of ribosome"/>
    <property type="evidence" value="ECO:0000318"/>
    <property type="project" value="GO_Central"/>
</dbReference>
<dbReference type="GO" id="GO:0006412">
    <property type="term" value="P:translation"/>
    <property type="evidence" value="ECO:0000318"/>
    <property type="project" value="GO_Central"/>
</dbReference>
<dbReference type="CDD" id="cd01433">
    <property type="entry name" value="Ribosomal_L16_L10e"/>
    <property type="match status" value="1"/>
</dbReference>
<dbReference type="FunFam" id="3.90.1170.10:FF:000008">
    <property type="entry name" value="50S ribosomal protein L10e"/>
    <property type="match status" value="1"/>
</dbReference>
<dbReference type="Gene3D" id="3.90.1170.10">
    <property type="entry name" value="Ribosomal protein L10e/L16"/>
    <property type="match status" value="1"/>
</dbReference>
<dbReference type="HAMAP" id="MF_00448">
    <property type="entry name" value="Ribosomal_uL16_arch"/>
    <property type="match status" value="1"/>
</dbReference>
<dbReference type="InterPro" id="IPR047873">
    <property type="entry name" value="Ribosomal_uL16"/>
</dbReference>
<dbReference type="InterPro" id="IPR022981">
    <property type="entry name" value="Ribosomal_uL16_arc"/>
</dbReference>
<dbReference type="InterPro" id="IPR018255">
    <property type="entry name" value="Ribosomal_uL16_CS_euk_arc"/>
</dbReference>
<dbReference type="InterPro" id="IPR016180">
    <property type="entry name" value="Ribosomal_uL16_dom"/>
</dbReference>
<dbReference type="InterPro" id="IPR001197">
    <property type="entry name" value="Ribosomal_uL16_euk_arch"/>
</dbReference>
<dbReference type="InterPro" id="IPR036920">
    <property type="entry name" value="Ribosomal_uL16_sf"/>
</dbReference>
<dbReference type="NCBIfam" id="NF003236">
    <property type="entry name" value="PRK04199.1-1"/>
    <property type="match status" value="1"/>
</dbReference>
<dbReference type="NCBIfam" id="NF003239">
    <property type="entry name" value="PRK04199.1-4"/>
    <property type="match status" value="1"/>
</dbReference>
<dbReference type="NCBIfam" id="TIGR00279">
    <property type="entry name" value="uL16_euk_arch"/>
    <property type="match status" value="1"/>
</dbReference>
<dbReference type="PANTHER" id="PTHR11726">
    <property type="entry name" value="60S RIBOSOMAL PROTEIN L10"/>
    <property type="match status" value="1"/>
</dbReference>
<dbReference type="Pfam" id="PF00252">
    <property type="entry name" value="Ribosomal_L16"/>
    <property type="match status" value="1"/>
</dbReference>
<dbReference type="PIRSF" id="PIRSF005590">
    <property type="entry name" value="Ribosomal_L10"/>
    <property type="match status" value="1"/>
</dbReference>
<dbReference type="SUPFAM" id="SSF54686">
    <property type="entry name" value="Ribosomal protein L16p/L10e"/>
    <property type="match status" value="1"/>
</dbReference>
<dbReference type="PROSITE" id="PS01257">
    <property type="entry name" value="RIBOSOMAL_L10E"/>
    <property type="match status" value="1"/>
</dbReference>
<feature type="chain" id="PRO_0000147135" description="Large ribosomal subunit protein uL16">
    <location>
        <begin position="1"/>
        <end position="174"/>
    </location>
</feature>
<evidence type="ECO:0000255" key="1">
    <source>
        <dbReference type="HAMAP-Rule" id="MF_00448"/>
    </source>
</evidence>
<evidence type="ECO:0000305" key="2"/>
<comment type="similarity">
    <text evidence="1">Belongs to the universal ribosomal protein uL16 family.</text>
</comment>
<sequence length="174" mass="19576">MASLRPNRCYRDVDKPPYTRKEYVKGVPQPKVVHFIMGNLSAEFPVKVNLVATRPIQIRHNALEAARVAANKYLTKMCGRMGYKFQIRVYPHQILREHKMATGAGADRISDGMRLAFGKPIGTAARVKEGQAILTVWVNPDKFPAAKEALRRAAMKLPVPCRIVIEQGKELLKL</sequence>
<organism>
    <name type="scientific">Methanocaldococcus jannaschii (strain ATCC 43067 / DSM 2661 / JAL-1 / JCM 10045 / NBRC 100440)</name>
    <name type="common">Methanococcus jannaschii</name>
    <dbReference type="NCBI Taxonomy" id="243232"/>
    <lineage>
        <taxon>Archaea</taxon>
        <taxon>Methanobacteriati</taxon>
        <taxon>Methanobacteriota</taxon>
        <taxon>Methanomada group</taxon>
        <taxon>Methanococci</taxon>
        <taxon>Methanococcales</taxon>
        <taxon>Methanocaldococcaceae</taxon>
        <taxon>Methanocaldococcus</taxon>
    </lineage>
</organism>
<accession>Q57963</accession>
<keyword id="KW-1185">Reference proteome</keyword>
<keyword id="KW-0687">Ribonucleoprotein</keyword>
<keyword id="KW-0689">Ribosomal protein</keyword>